<reference key="1">
    <citation type="submission" date="2004-11" db="EMBL/GenBank/DDBJ databases">
        <authorList>
            <consortium name="The German cDNA consortium"/>
        </authorList>
    </citation>
    <scope>NUCLEOTIDE SEQUENCE [LARGE SCALE MRNA]</scope>
    <source>
        <tissue>Brain cortex</tissue>
    </source>
</reference>
<proteinExistence type="inferred from homology"/>
<name>LSM8_PONAB</name>
<accession>Q5RCP3</accession>
<organism>
    <name type="scientific">Pongo abelii</name>
    <name type="common">Sumatran orangutan</name>
    <name type="synonym">Pongo pygmaeus abelii</name>
    <dbReference type="NCBI Taxonomy" id="9601"/>
    <lineage>
        <taxon>Eukaryota</taxon>
        <taxon>Metazoa</taxon>
        <taxon>Chordata</taxon>
        <taxon>Craniata</taxon>
        <taxon>Vertebrata</taxon>
        <taxon>Euteleostomi</taxon>
        <taxon>Mammalia</taxon>
        <taxon>Eutheria</taxon>
        <taxon>Euarchontoglires</taxon>
        <taxon>Primates</taxon>
        <taxon>Haplorrhini</taxon>
        <taxon>Catarrhini</taxon>
        <taxon>Hominidae</taxon>
        <taxon>Pongo</taxon>
    </lineage>
</organism>
<sequence>MTSALENYINRTVAVITSDGRMIVGTLKGFDQTINLILDESHERVFSSSQGVEQVVLGLYIVRGDNVAVIGEIDEETDSALDLGNIRAEPLNSVAH</sequence>
<protein>
    <recommendedName>
        <fullName>U6 snRNA-associated Sm-like protein LSm8</fullName>
    </recommendedName>
</protein>
<gene>
    <name type="primary">LSM8</name>
</gene>
<keyword id="KW-0007">Acetylation</keyword>
<keyword id="KW-0507">mRNA processing</keyword>
<keyword id="KW-0508">mRNA splicing</keyword>
<keyword id="KW-0539">Nucleus</keyword>
<keyword id="KW-1185">Reference proteome</keyword>
<keyword id="KW-0687">Ribonucleoprotein</keyword>
<keyword id="KW-0694">RNA-binding</keyword>
<keyword id="KW-0747">Spliceosome</keyword>
<dbReference type="EMBL" id="CR858226">
    <property type="protein sequence ID" value="CAH90464.1"/>
    <property type="molecule type" value="mRNA"/>
</dbReference>
<dbReference type="RefSeq" id="NP_001125239.1">
    <property type="nucleotide sequence ID" value="NM_001131767.1"/>
</dbReference>
<dbReference type="RefSeq" id="XP_003777165.1">
    <property type="nucleotide sequence ID" value="XM_003777117.1"/>
</dbReference>
<dbReference type="SMR" id="Q5RCP3"/>
<dbReference type="FunCoup" id="Q5RCP3">
    <property type="interactions" value="2061"/>
</dbReference>
<dbReference type="STRING" id="9601.ENSPPYP00000024548"/>
<dbReference type="GeneID" id="100172134"/>
<dbReference type="KEGG" id="pon:100172134"/>
<dbReference type="CTD" id="51691"/>
<dbReference type="eggNOG" id="KOG1784">
    <property type="taxonomic scope" value="Eukaryota"/>
</dbReference>
<dbReference type="HOGENOM" id="CLU_076902_8_2_1"/>
<dbReference type="InParanoid" id="Q5RCP3"/>
<dbReference type="OrthoDB" id="10263346at2759"/>
<dbReference type="TreeFam" id="TF314555"/>
<dbReference type="Proteomes" id="UP000001595">
    <property type="component" value="Chromosome 7"/>
</dbReference>
<dbReference type="GO" id="GO:0120115">
    <property type="term" value="C:Lsm2-8 complex"/>
    <property type="evidence" value="ECO:0000250"/>
    <property type="project" value="UniProtKB"/>
</dbReference>
<dbReference type="GO" id="GO:0005634">
    <property type="term" value="C:nucleus"/>
    <property type="evidence" value="ECO:0000250"/>
    <property type="project" value="UniProtKB"/>
</dbReference>
<dbReference type="GO" id="GO:0071005">
    <property type="term" value="C:U2-type precatalytic spliceosome"/>
    <property type="evidence" value="ECO:0000250"/>
    <property type="project" value="UniProtKB"/>
</dbReference>
<dbReference type="GO" id="GO:0046540">
    <property type="term" value="C:U4/U6 x U5 tri-snRNP complex"/>
    <property type="evidence" value="ECO:0000250"/>
    <property type="project" value="UniProtKB"/>
</dbReference>
<dbReference type="GO" id="GO:0005688">
    <property type="term" value="C:U6 snRNP"/>
    <property type="evidence" value="ECO:0007669"/>
    <property type="project" value="InterPro"/>
</dbReference>
<dbReference type="GO" id="GO:0003729">
    <property type="term" value="F:mRNA binding"/>
    <property type="evidence" value="ECO:0007669"/>
    <property type="project" value="TreeGrafter"/>
</dbReference>
<dbReference type="GO" id="GO:0000398">
    <property type="term" value="P:mRNA splicing, via spliceosome"/>
    <property type="evidence" value="ECO:0000250"/>
    <property type="project" value="UniProtKB"/>
</dbReference>
<dbReference type="CDD" id="cd01727">
    <property type="entry name" value="LSm8"/>
    <property type="match status" value="1"/>
</dbReference>
<dbReference type="FunFam" id="2.30.30.100:FF:000022">
    <property type="entry name" value="U6 snRNA-associated Sm-like protein LSm8"/>
    <property type="match status" value="1"/>
</dbReference>
<dbReference type="Gene3D" id="2.30.30.100">
    <property type="match status" value="1"/>
</dbReference>
<dbReference type="InterPro" id="IPR034103">
    <property type="entry name" value="Lsm8"/>
</dbReference>
<dbReference type="InterPro" id="IPR010920">
    <property type="entry name" value="LSM_dom_sf"/>
</dbReference>
<dbReference type="InterPro" id="IPR044642">
    <property type="entry name" value="PTHR15588"/>
</dbReference>
<dbReference type="InterPro" id="IPR047575">
    <property type="entry name" value="Sm"/>
</dbReference>
<dbReference type="InterPro" id="IPR001163">
    <property type="entry name" value="Sm_dom_euk/arc"/>
</dbReference>
<dbReference type="PANTHER" id="PTHR15588">
    <property type="entry name" value="LSM1"/>
    <property type="match status" value="1"/>
</dbReference>
<dbReference type="PANTHER" id="PTHR15588:SF9">
    <property type="entry name" value="U6 SNRNA-ASSOCIATED SM-LIKE PROTEIN LSM8"/>
    <property type="match status" value="1"/>
</dbReference>
<dbReference type="Pfam" id="PF01423">
    <property type="entry name" value="LSM"/>
    <property type="match status" value="1"/>
</dbReference>
<dbReference type="SMART" id="SM00651">
    <property type="entry name" value="Sm"/>
    <property type="match status" value="1"/>
</dbReference>
<dbReference type="SUPFAM" id="SSF50182">
    <property type="entry name" value="Sm-like ribonucleoproteins"/>
    <property type="match status" value="1"/>
</dbReference>
<dbReference type="PROSITE" id="PS52002">
    <property type="entry name" value="SM"/>
    <property type="match status" value="1"/>
</dbReference>
<feature type="initiator methionine" description="Removed" evidence="1">
    <location>
        <position position="1"/>
    </location>
</feature>
<feature type="chain" id="PRO_0000238673" description="U6 snRNA-associated Sm-like protein LSm8">
    <location>
        <begin position="2"/>
        <end position="96"/>
    </location>
</feature>
<feature type="domain" description="Sm" evidence="2">
    <location>
        <begin position="1"/>
        <end position="76"/>
    </location>
</feature>
<feature type="modified residue" description="N-acetylthreonine" evidence="1">
    <location>
        <position position="2"/>
    </location>
</feature>
<evidence type="ECO:0000250" key="1">
    <source>
        <dbReference type="UniProtKB" id="O95777"/>
    </source>
</evidence>
<evidence type="ECO:0000255" key="2">
    <source>
        <dbReference type="PROSITE-ProRule" id="PRU01346"/>
    </source>
</evidence>
<evidence type="ECO:0000305" key="3"/>
<comment type="function">
    <text evidence="1">Plays a role in pre-mRNA splicing as component of the U4/U6-U5 tri-snRNP complex that is involved in spliceosome assembly, and as component of the precatalytic spliceosome (spliceosome B complex). The heptameric LSM2-8 complex binds specifically to the 3'-terminal U-tract of U6 snRNA.</text>
</comment>
<comment type="subunit">
    <text evidence="1">Component of the precatalytic spliceosome (spliceosome B complex). Component of the U4/U6-U5 tri-snRNP complex, a building block of the precatalytic spliceosome (spliceosome B complex). The U4/U6-U5 tri-snRNP complex is composed of the U4, U6 and U5 snRNAs and at least PRPF3, PRPF4, PRPF6, PRPF8, PRPF31, SNRNP200, TXNL4A, SNRNP40, SNRPB, SNRPD1, SNRPD2, SNRPD3, SNRPE, SNRPF, SNRPG, DDX23, CD2BP2, PPIH, SNU13, EFTUD2, SART1 and USP39, plus LSM2, LSM3, LSM4, LSM5, LSM6, LSM7 and LSM8. LSM2, LSM3, LSM4, LSM5, LSM6, LSM7 and LSM8 form a heptameric, ring-shaped subcomplex (the LSM2-8 complex) that is part of the U4/U6-U5 tri-snRNP complex and the precatalytic spliceosome.</text>
</comment>
<comment type="subcellular location">
    <subcellularLocation>
        <location evidence="1">Nucleus</location>
    </subcellularLocation>
</comment>
<comment type="similarity">
    <text evidence="3">Belongs to the snRNP Sm proteins family.</text>
</comment>